<keyword id="KW-0256">Endoplasmic reticulum</keyword>
<keyword id="KW-0472">Membrane</keyword>
<keyword id="KW-0653">Protein transport</keyword>
<keyword id="KW-1185">Reference proteome</keyword>
<keyword id="KW-0811">Translocation</keyword>
<keyword id="KW-0812">Transmembrane</keyword>
<keyword id="KW-1133">Transmembrane helix</keyword>
<keyword id="KW-0813">Transport</keyword>
<feature type="chain" id="PRO_0000206624" description="Translocation protein SEC62">
    <location>
        <begin position="1"/>
        <end position="246"/>
    </location>
</feature>
<feature type="topological domain" description="Cytoplasmic" evidence="2">
    <location>
        <begin position="1"/>
        <end position="134"/>
    </location>
</feature>
<feature type="transmembrane region" description="Helical" evidence="2">
    <location>
        <begin position="135"/>
        <end position="155"/>
    </location>
</feature>
<feature type="topological domain" description="Lumenal" evidence="2">
    <location>
        <begin position="156"/>
        <end position="168"/>
    </location>
</feature>
<feature type="transmembrane region" description="Helical" evidence="2">
    <location>
        <begin position="169"/>
        <end position="189"/>
    </location>
</feature>
<feature type="topological domain" description="Cytoplasmic" evidence="2">
    <location>
        <begin position="190"/>
        <end position="246"/>
    </location>
</feature>
<sequence length="246" mass="28172">MSEPSPQSTIAIANLLRTHSDLKQRQGLFQSRLVDFFRYKRFVRALKSDKYKAKSKKQPELYPAVTSDEDARNIFVSLIKAQFVVPAVKLHSAECKEHGLKPNKSYPNLLLSNKATLQPDEYYVWSYNPKSIYDYLTVIGIIVGVLAFVCYPLWPPYMKRGTYYLSIAALALIGVFFGIAIVRLIVYLLSLAAVSEKGGFWLFPNLFEDCGVIESFKPLYGFGEKECYSFLKKEKRKHRSVAKKQK</sequence>
<proteinExistence type="inferred from homology"/>
<reference key="1">
    <citation type="journal article" date="2004" name="Nature">
        <title>Genome evolution in yeasts.</title>
        <authorList>
            <person name="Dujon B."/>
            <person name="Sherman D."/>
            <person name="Fischer G."/>
            <person name="Durrens P."/>
            <person name="Casaregola S."/>
            <person name="Lafontaine I."/>
            <person name="de Montigny J."/>
            <person name="Marck C."/>
            <person name="Neuveglise C."/>
            <person name="Talla E."/>
            <person name="Goffard N."/>
            <person name="Frangeul L."/>
            <person name="Aigle M."/>
            <person name="Anthouard V."/>
            <person name="Babour A."/>
            <person name="Barbe V."/>
            <person name="Barnay S."/>
            <person name="Blanchin S."/>
            <person name="Beckerich J.-M."/>
            <person name="Beyne E."/>
            <person name="Bleykasten C."/>
            <person name="Boisrame A."/>
            <person name="Boyer J."/>
            <person name="Cattolico L."/>
            <person name="Confanioleri F."/>
            <person name="de Daruvar A."/>
            <person name="Despons L."/>
            <person name="Fabre E."/>
            <person name="Fairhead C."/>
            <person name="Ferry-Dumazet H."/>
            <person name="Groppi A."/>
            <person name="Hantraye F."/>
            <person name="Hennequin C."/>
            <person name="Jauniaux N."/>
            <person name="Joyet P."/>
            <person name="Kachouri R."/>
            <person name="Kerrest A."/>
            <person name="Koszul R."/>
            <person name="Lemaire M."/>
            <person name="Lesur I."/>
            <person name="Ma L."/>
            <person name="Muller H."/>
            <person name="Nicaud J.-M."/>
            <person name="Nikolski M."/>
            <person name="Oztas S."/>
            <person name="Ozier-Kalogeropoulos O."/>
            <person name="Pellenz S."/>
            <person name="Potier S."/>
            <person name="Richard G.-F."/>
            <person name="Straub M.-L."/>
            <person name="Suleau A."/>
            <person name="Swennen D."/>
            <person name="Tekaia F."/>
            <person name="Wesolowski-Louvel M."/>
            <person name="Westhof E."/>
            <person name="Wirth B."/>
            <person name="Zeniou-Meyer M."/>
            <person name="Zivanovic Y."/>
            <person name="Bolotin-Fukuhara M."/>
            <person name="Thierry A."/>
            <person name="Bouchier C."/>
            <person name="Caudron B."/>
            <person name="Scarpelli C."/>
            <person name="Gaillardin C."/>
            <person name="Weissenbach J."/>
            <person name="Wincker P."/>
            <person name="Souciet J.-L."/>
        </authorList>
    </citation>
    <scope>NUCLEOTIDE SEQUENCE [LARGE SCALE GENOMIC DNA]</scope>
    <source>
        <strain>ATCC 8585 / CBS 2359 / DSM 70799 / NBRC 1267 / NRRL Y-1140 / WM37</strain>
    </source>
</reference>
<name>SEC62_KLULA</name>
<accession>Q6CLZ9</accession>
<gene>
    <name type="primary">SEC62</name>
    <name type="ordered locus">KLLA0E24200g</name>
</gene>
<organism>
    <name type="scientific">Kluyveromyces lactis (strain ATCC 8585 / CBS 2359 / DSM 70799 / NBRC 1267 / NRRL Y-1140 / WM37)</name>
    <name type="common">Yeast</name>
    <name type="synonym">Candida sphaerica</name>
    <dbReference type="NCBI Taxonomy" id="284590"/>
    <lineage>
        <taxon>Eukaryota</taxon>
        <taxon>Fungi</taxon>
        <taxon>Dikarya</taxon>
        <taxon>Ascomycota</taxon>
        <taxon>Saccharomycotina</taxon>
        <taxon>Saccharomycetes</taxon>
        <taxon>Saccharomycetales</taxon>
        <taxon>Saccharomycetaceae</taxon>
        <taxon>Kluyveromyces</taxon>
    </lineage>
</organism>
<evidence type="ECO:0000250" key="1"/>
<evidence type="ECO:0000255" key="2"/>
<evidence type="ECO:0000305" key="3"/>
<protein>
    <recommendedName>
        <fullName>Translocation protein SEC62</fullName>
    </recommendedName>
</protein>
<comment type="function">
    <text evidence="1">Required for preprotein translocation.</text>
</comment>
<comment type="subunit">
    <text evidence="1">Part of a complex that contains SEC61, SEC62, SEC63, SEC66 and SEC72.</text>
</comment>
<comment type="subcellular location">
    <subcellularLocation>
        <location evidence="1">Endoplasmic reticulum membrane</location>
        <topology evidence="1">Multi-pass membrane protein</topology>
    </subcellularLocation>
</comment>
<comment type="similarity">
    <text evidence="3">Belongs to the SEC62 family.</text>
</comment>
<dbReference type="EMBL" id="CR382125">
    <property type="protein sequence ID" value="CAH00127.1"/>
    <property type="molecule type" value="Genomic_DNA"/>
</dbReference>
<dbReference type="RefSeq" id="XP_455040.1">
    <property type="nucleotide sequence ID" value="XM_455040.1"/>
</dbReference>
<dbReference type="SMR" id="Q6CLZ9"/>
<dbReference type="FunCoup" id="Q6CLZ9">
    <property type="interactions" value="155"/>
</dbReference>
<dbReference type="STRING" id="284590.Q6CLZ9"/>
<dbReference type="PaxDb" id="284590-Q6CLZ9"/>
<dbReference type="KEGG" id="kla:KLLA0_E24157g"/>
<dbReference type="eggNOG" id="KOG2927">
    <property type="taxonomic scope" value="Eukaryota"/>
</dbReference>
<dbReference type="HOGENOM" id="CLU_040936_1_0_1"/>
<dbReference type="InParanoid" id="Q6CLZ9"/>
<dbReference type="OMA" id="WGWQETK"/>
<dbReference type="Proteomes" id="UP000000598">
    <property type="component" value="Chromosome E"/>
</dbReference>
<dbReference type="GO" id="GO:0005789">
    <property type="term" value="C:endoplasmic reticulum membrane"/>
    <property type="evidence" value="ECO:0007669"/>
    <property type="project" value="UniProtKB-SubCell"/>
</dbReference>
<dbReference type="GO" id="GO:0031204">
    <property type="term" value="P:post-translational protein targeting to membrane, translocation"/>
    <property type="evidence" value="ECO:0007669"/>
    <property type="project" value="TreeGrafter"/>
</dbReference>
<dbReference type="InterPro" id="IPR004728">
    <property type="entry name" value="Sec62"/>
</dbReference>
<dbReference type="InterPro" id="IPR011553">
    <property type="entry name" value="Sec62_asco"/>
</dbReference>
<dbReference type="NCBIfam" id="TIGR00869">
    <property type="entry name" value="sec62"/>
    <property type="match status" value="1"/>
</dbReference>
<dbReference type="PANTHER" id="PTHR12443">
    <property type="entry name" value="TRANSLOCATION PROTEIN SEC62"/>
    <property type="match status" value="1"/>
</dbReference>
<dbReference type="PANTHER" id="PTHR12443:SF9">
    <property type="entry name" value="TRANSLOCATION PROTEIN SEC62"/>
    <property type="match status" value="1"/>
</dbReference>
<dbReference type="Pfam" id="PF03839">
    <property type="entry name" value="Sec62"/>
    <property type="match status" value="1"/>
</dbReference>